<organism>
    <name type="scientific">Caulobacter vibrioides (strain ATCC 19089 / CIP 103742 / CB 15)</name>
    <name type="common">Caulobacter crescentus</name>
    <dbReference type="NCBI Taxonomy" id="190650"/>
    <lineage>
        <taxon>Bacteria</taxon>
        <taxon>Pseudomonadati</taxon>
        <taxon>Pseudomonadota</taxon>
        <taxon>Alphaproteobacteria</taxon>
        <taxon>Caulobacterales</taxon>
        <taxon>Caulobacteraceae</taxon>
        <taxon>Caulobacter</taxon>
    </lineage>
</organism>
<accession>Q9ABE7</accession>
<gene>
    <name evidence="1" type="primary">dapD</name>
    <name type="ordered locus">CC_0281</name>
</gene>
<keyword id="KW-0012">Acyltransferase</keyword>
<keyword id="KW-0028">Amino-acid biosynthesis</keyword>
<keyword id="KW-0963">Cytoplasm</keyword>
<keyword id="KW-0220">Diaminopimelate biosynthesis</keyword>
<keyword id="KW-0457">Lysine biosynthesis</keyword>
<keyword id="KW-1185">Reference proteome</keyword>
<keyword id="KW-0677">Repeat</keyword>
<keyword id="KW-0808">Transferase</keyword>
<comment type="catalytic activity">
    <reaction evidence="1">
        <text>(S)-2,3,4,5-tetrahydrodipicolinate + succinyl-CoA + H2O = (S)-2-succinylamino-6-oxoheptanedioate + CoA</text>
        <dbReference type="Rhea" id="RHEA:17325"/>
        <dbReference type="ChEBI" id="CHEBI:15377"/>
        <dbReference type="ChEBI" id="CHEBI:15685"/>
        <dbReference type="ChEBI" id="CHEBI:16845"/>
        <dbReference type="ChEBI" id="CHEBI:57287"/>
        <dbReference type="ChEBI" id="CHEBI:57292"/>
        <dbReference type="EC" id="2.3.1.117"/>
    </reaction>
</comment>
<comment type="pathway">
    <text evidence="1">Amino-acid biosynthesis; L-lysine biosynthesis via DAP pathway; LL-2,6-diaminopimelate from (S)-tetrahydrodipicolinate (succinylase route): step 1/3.</text>
</comment>
<comment type="subunit">
    <text evidence="1">Homotrimer.</text>
</comment>
<comment type="subcellular location">
    <subcellularLocation>
        <location evidence="1">Cytoplasm</location>
    </subcellularLocation>
</comment>
<comment type="similarity">
    <text evidence="1">Belongs to the transferase hexapeptide repeat family.</text>
</comment>
<comment type="sequence caution" evidence="2">
    <conflict type="erroneous initiation">
        <sequence resource="EMBL-CDS" id="AAK22268"/>
    </conflict>
</comment>
<sequence length="276" mass="29128">MADLQTEIEAAWEARADISAATTGPVRTAVDEALRLLDSGEARVAEKIDGEWFTHQWLKKAVLLSFRLNPNTVMRSGALGGGVGPWWDKVPNKFDGWDAPQFEAGGFRAVPGAIVRRGAHIGKNVILMPSFVNIGGYVDEGTMVDTWVTVGSCAQIGKNVHLSGGVGIGGVLEPLQANPTIIEDNCFIGARSEVVEGVVVGEGSVLSMGVFISASTKIVDRKTGAVHIGKVPPYSVVVPGNLPDPNGGPGLYCAVIVKTVDAQTRSKTSINDLLRD</sequence>
<reference key="1">
    <citation type="journal article" date="2001" name="Proc. Natl. Acad. Sci. U.S.A.">
        <title>Complete genome sequence of Caulobacter crescentus.</title>
        <authorList>
            <person name="Nierman W.C."/>
            <person name="Feldblyum T.V."/>
            <person name="Laub M.T."/>
            <person name="Paulsen I.T."/>
            <person name="Nelson K.E."/>
            <person name="Eisen J.A."/>
            <person name="Heidelberg J.F."/>
            <person name="Alley M.R.K."/>
            <person name="Ohta N."/>
            <person name="Maddock J.R."/>
            <person name="Potocka I."/>
            <person name="Nelson W.C."/>
            <person name="Newton A."/>
            <person name="Stephens C."/>
            <person name="Phadke N.D."/>
            <person name="Ely B."/>
            <person name="DeBoy R.T."/>
            <person name="Dodson R.J."/>
            <person name="Durkin A.S."/>
            <person name="Gwinn M.L."/>
            <person name="Haft D.H."/>
            <person name="Kolonay J.F."/>
            <person name="Smit J."/>
            <person name="Craven M.B."/>
            <person name="Khouri H.M."/>
            <person name="Shetty J."/>
            <person name="Berry K.J."/>
            <person name="Utterback T.R."/>
            <person name="Tran K."/>
            <person name="Wolf A.M."/>
            <person name="Vamathevan J.J."/>
            <person name="Ermolaeva M.D."/>
            <person name="White O."/>
            <person name="Salzberg S.L."/>
            <person name="Venter J.C."/>
            <person name="Shapiro L."/>
            <person name="Fraser C.M."/>
        </authorList>
    </citation>
    <scope>NUCLEOTIDE SEQUENCE [LARGE SCALE GENOMIC DNA]</scope>
    <source>
        <strain>ATCC 19089 / CIP 103742 / CB 15</strain>
    </source>
</reference>
<feature type="chain" id="PRO_0000196929" description="2,3,4,5-tetrahydropyridine-2,6-dicarboxylate N-succinyltransferase">
    <location>
        <begin position="1"/>
        <end position="276"/>
    </location>
</feature>
<feature type="binding site" evidence="1">
    <location>
        <position position="108"/>
    </location>
    <ligand>
        <name>substrate</name>
    </ligand>
</feature>
<feature type="binding site" evidence="1">
    <location>
        <position position="145"/>
    </location>
    <ligand>
        <name>substrate</name>
    </ligand>
</feature>
<evidence type="ECO:0000255" key="1">
    <source>
        <dbReference type="HAMAP-Rule" id="MF_00811"/>
    </source>
</evidence>
<evidence type="ECO:0000305" key="2"/>
<dbReference type="EC" id="2.3.1.117" evidence="1"/>
<dbReference type="EMBL" id="AE005673">
    <property type="protein sequence ID" value="AAK22268.1"/>
    <property type="status" value="ALT_INIT"/>
    <property type="molecule type" value="Genomic_DNA"/>
</dbReference>
<dbReference type="PIR" id="H87283">
    <property type="entry name" value="H87283"/>
</dbReference>
<dbReference type="RefSeq" id="NP_419100.1">
    <property type="nucleotide sequence ID" value="NC_002696.2"/>
</dbReference>
<dbReference type="SMR" id="Q9ABE7"/>
<dbReference type="STRING" id="190650.CC_0281"/>
<dbReference type="EnsemblBacteria" id="AAK22268">
    <property type="protein sequence ID" value="AAK22268"/>
    <property type="gene ID" value="CC_0281"/>
</dbReference>
<dbReference type="KEGG" id="ccr:CC_0281"/>
<dbReference type="PATRIC" id="fig|190650.5.peg.279"/>
<dbReference type="eggNOG" id="COG2171">
    <property type="taxonomic scope" value="Bacteria"/>
</dbReference>
<dbReference type="HOGENOM" id="CLU_050859_0_1_5"/>
<dbReference type="UniPathway" id="UPA00034">
    <property type="reaction ID" value="UER00019"/>
</dbReference>
<dbReference type="Proteomes" id="UP000001816">
    <property type="component" value="Chromosome"/>
</dbReference>
<dbReference type="GO" id="GO:0005737">
    <property type="term" value="C:cytoplasm"/>
    <property type="evidence" value="ECO:0007669"/>
    <property type="project" value="UniProtKB-SubCell"/>
</dbReference>
<dbReference type="GO" id="GO:0008666">
    <property type="term" value="F:2,3,4,5-tetrahydropyridine-2,6-dicarboxylate N-succinyltransferase activity"/>
    <property type="evidence" value="ECO:0007669"/>
    <property type="project" value="UniProtKB-UniRule"/>
</dbReference>
<dbReference type="GO" id="GO:0016779">
    <property type="term" value="F:nucleotidyltransferase activity"/>
    <property type="evidence" value="ECO:0007669"/>
    <property type="project" value="TreeGrafter"/>
</dbReference>
<dbReference type="GO" id="GO:0019877">
    <property type="term" value="P:diaminopimelate biosynthetic process"/>
    <property type="evidence" value="ECO:0007669"/>
    <property type="project" value="UniProtKB-UniRule"/>
</dbReference>
<dbReference type="GO" id="GO:0009089">
    <property type="term" value="P:lysine biosynthetic process via diaminopimelate"/>
    <property type="evidence" value="ECO:0007669"/>
    <property type="project" value="UniProtKB-UniRule"/>
</dbReference>
<dbReference type="CDD" id="cd03350">
    <property type="entry name" value="LbH_THP_succinylT"/>
    <property type="match status" value="1"/>
</dbReference>
<dbReference type="Gene3D" id="2.160.10.10">
    <property type="entry name" value="Hexapeptide repeat proteins"/>
    <property type="match status" value="1"/>
</dbReference>
<dbReference type="Gene3D" id="1.10.166.10">
    <property type="entry name" value="Tetrahydrodipicolinate-N-succinyltransferase, N-terminal domain"/>
    <property type="match status" value="1"/>
</dbReference>
<dbReference type="HAMAP" id="MF_00811">
    <property type="entry name" value="DapD"/>
    <property type="match status" value="1"/>
</dbReference>
<dbReference type="InterPro" id="IPR005664">
    <property type="entry name" value="DapD_Trfase_Hexpep_rpt_fam"/>
</dbReference>
<dbReference type="InterPro" id="IPR001451">
    <property type="entry name" value="Hexapep"/>
</dbReference>
<dbReference type="InterPro" id="IPR018357">
    <property type="entry name" value="Hexapep_transf_CS"/>
</dbReference>
<dbReference type="InterPro" id="IPR023180">
    <property type="entry name" value="THP_succinylTrfase_dom1"/>
</dbReference>
<dbReference type="InterPro" id="IPR037133">
    <property type="entry name" value="THP_succinylTrfase_N_sf"/>
</dbReference>
<dbReference type="InterPro" id="IPR011004">
    <property type="entry name" value="Trimer_LpxA-like_sf"/>
</dbReference>
<dbReference type="NCBIfam" id="TIGR00965">
    <property type="entry name" value="dapD"/>
    <property type="match status" value="1"/>
</dbReference>
<dbReference type="NCBIfam" id="NF008808">
    <property type="entry name" value="PRK11830.1"/>
    <property type="match status" value="1"/>
</dbReference>
<dbReference type="PANTHER" id="PTHR19136:SF52">
    <property type="entry name" value="2,3,4,5-TETRAHYDROPYRIDINE-2,6-DICARBOXYLATE N-SUCCINYLTRANSFERASE"/>
    <property type="match status" value="1"/>
</dbReference>
<dbReference type="PANTHER" id="PTHR19136">
    <property type="entry name" value="MOLYBDENUM COFACTOR GUANYLYLTRANSFERASE"/>
    <property type="match status" value="1"/>
</dbReference>
<dbReference type="Pfam" id="PF14602">
    <property type="entry name" value="Hexapep_2"/>
    <property type="match status" value="1"/>
</dbReference>
<dbReference type="Pfam" id="PF14805">
    <property type="entry name" value="THDPS_N_2"/>
    <property type="match status" value="1"/>
</dbReference>
<dbReference type="SUPFAM" id="SSF51161">
    <property type="entry name" value="Trimeric LpxA-like enzymes"/>
    <property type="match status" value="1"/>
</dbReference>
<dbReference type="PROSITE" id="PS00101">
    <property type="entry name" value="HEXAPEP_TRANSFERASES"/>
    <property type="match status" value="1"/>
</dbReference>
<protein>
    <recommendedName>
        <fullName evidence="1">2,3,4,5-tetrahydropyridine-2,6-dicarboxylate N-succinyltransferase</fullName>
        <ecNumber evidence="1">2.3.1.117</ecNumber>
    </recommendedName>
    <alternativeName>
        <fullName evidence="1">Tetrahydrodipicolinate N-succinyltransferase</fullName>
        <shortName evidence="1">THDP succinyltransferase</shortName>
        <shortName evidence="1">THP succinyltransferase</shortName>
        <shortName evidence="1">Tetrahydropicolinate succinylase</shortName>
    </alternativeName>
</protein>
<name>DAPD_CAUVC</name>
<proteinExistence type="inferred from homology"/>